<organismHost>
    <name type="scientific">Escherichia coli</name>
    <dbReference type="NCBI Taxonomy" id="562"/>
</organismHost>
<organism>
    <name type="scientific">Escherichia phage G4</name>
    <name type="common">Bacteriophage G4</name>
    <dbReference type="NCBI Taxonomy" id="10843"/>
    <lineage>
        <taxon>Viruses</taxon>
        <taxon>Monodnaviria</taxon>
        <taxon>Sangervirae</taxon>
        <taxon>Phixviricota</taxon>
        <taxon>Malgrandaviricetes</taxon>
        <taxon>Petitvirales</taxon>
        <taxon>Microviridae</taxon>
        <taxon>Bullavirinae</taxon>
        <taxon>Gequatrovirus</taxon>
        <taxon>Gequatrovirus G4</taxon>
    </lineage>
</organism>
<proteinExistence type="evidence at protein level"/>
<comment type="function">
    <text evidence="1">Mediates ssDNA packaging into virion, it locates to the internal surface of the capsid, thereby displacing the internal scaffolding protein B during virion formation. Protein J binds to and is packaged with the viral ssDNA. Additionally, protein J plays a role in viral attachment efficiency to the host cell.</text>
</comment>
<comment type="subunit">
    <text evidence="1">Interacts with F protein.</text>
</comment>
<comment type="subcellular location">
    <subcellularLocation>
        <location evidence="1">Virion</location>
    </subcellularLocation>
    <subcellularLocation>
        <location evidence="1">Host cytoplasm</location>
    </subcellularLocation>
    <text evidence="1">situated at the interface between the internal surface of the capsid and the nucleic acid.</text>
</comment>
<comment type="similarity">
    <text evidence="2">Belongs to the microviridae J protein family.</text>
</comment>
<comment type="online information" name="Virus Particle ExploreR db">
    <link uri="https://viperdb.org/Info_Page.php?VDB=1gff"/>
    <text>Icosahedral capsid structure</text>
</comment>
<sequence>MKKSIRRSGGKSKGARLWYVGGTQY</sequence>
<feature type="chain" id="PRO_0000164906" description="DNA-binding protein J">
    <location>
        <begin position="1"/>
        <end position="25"/>
    </location>
</feature>
<feature type="strand" evidence="3">
    <location>
        <begin position="20"/>
        <end position="22"/>
    </location>
</feature>
<reference key="1">
    <citation type="journal article" date="1978" name="Nature">
        <title>Nucleotide sequence of bacteriophage G4 DNA.</title>
        <authorList>
            <person name="Godson G.N."/>
            <person name="Barrell B.G."/>
            <person name="Staden R."/>
            <person name="Fiddes J.C."/>
        </authorList>
    </citation>
    <scope>NUCLEOTIDE SEQUENCE [GENOMIC DNA]</scope>
</reference>
<reference key="2">
    <citation type="journal article" date="1996" name="J. Mol. Biol.">
        <title>Atomic structure of the degraded procapsid particle of the bacteriophage G4: induced structural changes in the presence of calcium ions and functional implications.</title>
        <authorList>
            <person name="McKenna R."/>
            <person name="Bowman B.R."/>
            <person name="Iiag L.L."/>
            <person name="Rossmann M.G."/>
            <person name="Fane B.A."/>
        </authorList>
    </citation>
    <scope>X-RAY CRYSTALLOGRAPHY (3.0 ANGSTROMS)</scope>
</reference>
<evidence type="ECO:0000250" key="1">
    <source>
        <dbReference type="UniProtKB" id="P69592"/>
    </source>
</evidence>
<evidence type="ECO:0000305" key="2"/>
<evidence type="ECO:0007829" key="3">
    <source>
        <dbReference type="PDB" id="1GFF"/>
    </source>
</evidence>
<keyword id="KW-0002">3D-structure</keyword>
<keyword id="KW-0167">Capsid protein</keyword>
<keyword id="KW-0238">DNA-binding</keyword>
<keyword id="KW-1035">Host cytoplasm</keyword>
<keyword id="KW-1185">Reference proteome</keyword>
<keyword id="KW-0231">Viral genome packaging</keyword>
<keyword id="KW-1188">Viral release from host cell</keyword>
<keyword id="KW-0946">Virion</keyword>
<accession>P03652</accession>
<protein>
    <recommendedName>
        <fullName>DNA-binding protein J</fullName>
    </recommendedName>
    <alternativeName>
        <fullName>J protein</fullName>
    </alternativeName>
    <alternativeName>
        <fullName>Small core protein</fullName>
    </alternativeName>
</protein>
<dbReference type="EMBL" id="V00657">
    <property type="protein sequence ID" value="CAA24018.1"/>
    <property type="molecule type" value="Genomic_DNA"/>
</dbReference>
<dbReference type="PIR" id="A04259">
    <property type="entry name" value="ZJBPG4"/>
</dbReference>
<dbReference type="PDB" id="1GFF">
    <property type="method" value="X-ray"/>
    <property type="resolution" value="3.00 A"/>
    <property type="chains" value="3=1-25"/>
</dbReference>
<dbReference type="PDBsum" id="1GFF"/>
<dbReference type="SMR" id="P03652"/>
<dbReference type="EvolutionaryTrace" id="P03652"/>
<dbReference type="Proteomes" id="UP000002140">
    <property type="component" value="Segment"/>
</dbReference>
<dbReference type="GO" id="GO:0030430">
    <property type="term" value="C:host cell cytoplasm"/>
    <property type="evidence" value="ECO:0007669"/>
    <property type="project" value="UniProtKB-SubCell"/>
</dbReference>
<dbReference type="GO" id="GO:0019028">
    <property type="term" value="C:viral capsid"/>
    <property type="evidence" value="ECO:0007669"/>
    <property type="project" value="UniProtKB-KW"/>
</dbReference>
<dbReference type="GO" id="GO:0003677">
    <property type="term" value="F:DNA binding"/>
    <property type="evidence" value="ECO:0007669"/>
    <property type="project" value="UniProtKB-KW"/>
</dbReference>
<dbReference type="InterPro" id="IPR006815">
    <property type="entry name" value="Microvir_J-like"/>
</dbReference>
<dbReference type="Pfam" id="PF04726">
    <property type="entry name" value="Microvir_J"/>
    <property type="match status" value="1"/>
</dbReference>
<dbReference type="PIRSF" id="PIRSF004161">
    <property type="entry name" value="Microvir_J"/>
    <property type="match status" value="1"/>
</dbReference>
<gene>
    <name type="primary">J</name>
</gene>
<name>J_BPG4</name>